<accession>Q2GGT6</accession>
<comment type="function">
    <text evidence="1">Specifically methylates the uridine in position 2552 of 23S rRNA at the 2'-O position of the ribose in the fully assembled 50S ribosomal subunit.</text>
</comment>
<comment type="catalytic activity">
    <reaction evidence="1">
        <text>uridine(2552) in 23S rRNA + S-adenosyl-L-methionine = 2'-O-methyluridine(2552) in 23S rRNA + S-adenosyl-L-homocysteine + H(+)</text>
        <dbReference type="Rhea" id="RHEA:42720"/>
        <dbReference type="Rhea" id="RHEA-COMP:10202"/>
        <dbReference type="Rhea" id="RHEA-COMP:10203"/>
        <dbReference type="ChEBI" id="CHEBI:15378"/>
        <dbReference type="ChEBI" id="CHEBI:57856"/>
        <dbReference type="ChEBI" id="CHEBI:59789"/>
        <dbReference type="ChEBI" id="CHEBI:65315"/>
        <dbReference type="ChEBI" id="CHEBI:74478"/>
        <dbReference type="EC" id="2.1.1.166"/>
    </reaction>
</comment>
<comment type="subcellular location">
    <subcellularLocation>
        <location evidence="1">Cytoplasm</location>
    </subcellularLocation>
</comment>
<comment type="similarity">
    <text evidence="1">Belongs to the class I-like SAM-binding methyltransferase superfamily. RNA methyltransferase RlmE family.</text>
</comment>
<reference key="1">
    <citation type="journal article" date="2006" name="PLoS Genet.">
        <title>Comparative genomics of emerging human ehrlichiosis agents.</title>
        <authorList>
            <person name="Dunning Hotopp J.C."/>
            <person name="Lin M."/>
            <person name="Madupu R."/>
            <person name="Crabtree J."/>
            <person name="Angiuoli S.V."/>
            <person name="Eisen J.A."/>
            <person name="Seshadri R."/>
            <person name="Ren Q."/>
            <person name="Wu M."/>
            <person name="Utterback T.R."/>
            <person name="Smith S."/>
            <person name="Lewis M."/>
            <person name="Khouri H."/>
            <person name="Zhang C."/>
            <person name="Niu H."/>
            <person name="Lin Q."/>
            <person name="Ohashi N."/>
            <person name="Zhi N."/>
            <person name="Nelson W.C."/>
            <person name="Brinkac L.M."/>
            <person name="Dodson R.J."/>
            <person name="Rosovitz M.J."/>
            <person name="Sundaram J.P."/>
            <person name="Daugherty S.C."/>
            <person name="Davidsen T."/>
            <person name="Durkin A.S."/>
            <person name="Gwinn M.L."/>
            <person name="Haft D.H."/>
            <person name="Selengut J.D."/>
            <person name="Sullivan S.A."/>
            <person name="Zafar N."/>
            <person name="Zhou L."/>
            <person name="Benahmed F."/>
            <person name="Forberger H."/>
            <person name="Halpin R."/>
            <person name="Mulligan S."/>
            <person name="Robinson J."/>
            <person name="White O."/>
            <person name="Rikihisa Y."/>
            <person name="Tettelin H."/>
        </authorList>
    </citation>
    <scope>NUCLEOTIDE SEQUENCE [LARGE SCALE GENOMIC DNA]</scope>
    <source>
        <strain>ATCC CRL-10679 / Arkansas</strain>
    </source>
</reference>
<organism>
    <name type="scientific">Ehrlichia chaffeensis (strain ATCC CRL-10679 / Arkansas)</name>
    <dbReference type="NCBI Taxonomy" id="205920"/>
    <lineage>
        <taxon>Bacteria</taxon>
        <taxon>Pseudomonadati</taxon>
        <taxon>Pseudomonadota</taxon>
        <taxon>Alphaproteobacteria</taxon>
        <taxon>Rickettsiales</taxon>
        <taxon>Anaplasmataceae</taxon>
        <taxon>Ehrlichia</taxon>
    </lineage>
</organism>
<protein>
    <recommendedName>
        <fullName evidence="1">Ribosomal RNA large subunit methyltransferase E</fullName>
        <ecNumber evidence="1">2.1.1.166</ecNumber>
    </recommendedName>
    <alternativeName>
        <fullName evidence="1">23S rRNA Um2552 methyltransferase</fullName>
    </alternativeName>
    <alternativeName>
        <fullName evidence="1">rRNA (uridine-2'-O-)-methyltransferase</fullName>
    </alternativeName>
</protein>
<evidence type="ECO:0000255" key="1">
    <source>
        <dbReference type="HAMAP-Rule" id="MF_01547"/>
    </source>
</evidence>
<proteinExistence type="inferred from homology"/>
<feature type="chain" id="PRO_0000282741" description="Ribosomal RNA large subunit methyltransferase E">
    <location>
        <begin position="1"/>
        <end position="212"/>
    </location>
</feature>
<feature type="active site" description="Proton acceptor" evidence="1">
    <location>
        <position position="157"/>
    </location>
</feature>
<feature type="binding site" evidence="1">
    <location>
        <position position="56"/>
    </location>
    <ligand>
        <name>S-adenosyl-L-methionine</name>
        <dbReference type="ChEBI" id="CHEBI:59789"/>
    </ligand>
</feature>
<feature type="binding site" evidence="1">
    <location>
        <position position="58"/>
    </location>
    <ligand>
        <name>S-adenosyl-L-methionine</name>
        <dbReference type="ChEBI" id="CHEBI:59789"/>
    </ligand>
</feature>
<feature type="binding site" evidence="1">
    <location>
        <position position="78"/>
    </location>
    <ligand>
        <name>S-adenosyl-L-methionine</name>
        <dbReference type="ChEBI" id="CHEBI:59789"/>
    </ligand>
</feature>
<feature type="binding site" evidence="1">
    <location>
        <position position="94"/>
    </location>
    <ligand>
        <name>S-adenosyl-L-methionine</name>
        <dbReference type="ChEBI" id="CHEBI:59789"/>
    </ligand>
</feature>
<feature type="binding site" evidence="1">
    <location>
        <position position="117"/>
    </location>
    <ligand>
        <name>S-adenosyl-L-methionine</name>
        <dbReference type="ChEBI" id="CHEBI:59789"/>
    </ligand>
</feature>
<keyword id="KW-0963">Cytoplasm</keyword>
<keyword id="KW-0489">Methyltransferase</keyword>
<keyword id="KW-1185">Reference proteome</keyword>
<keyword id="KW-0698">rRNA processing</keyword>
<keyword id="KW-0949">S-adenosyl-L-methionine</keyword>
<keyword id="KW-0808">Transferase</keyword>
<sequence>MSSTRWLHRQLNDPYVSLAKKQGYRSRATFKLIEMDSKFSIFKKGQYVLDLGSSPGGWSQFAAQRVSHNNNNPVFAVDIQNMDAIPNVIFIQCDIINDIELLSDKFHNKKFDVILSDMAPKACGNKQVDHANIINLCEISLDIVVRFTRENGVFITKILQGEYEKEFYQSMKTYFQSVKYFKPKASRKDSSEMYLVGLGFKKDSQDIKTIES</sequence>
<dbReference type="EC" id="2.1.1.166" evidence="1"/>
<dbReference type="EMBL" id="CP000236">
    <property type="protein sequence ID" value="ABD45105.1"/>
    <property type="molecule type" value="Genomic_DNA"/>
</dbReference>
<dbReference type="SMR" id="Q2GGT6"/>
<dbReference type="STRING" id="205920.ECH_0533"/>
<dbReference type="KEGG" id="ech:ECH_0533"/>
<dbReference type="eggNOG" id="COG0293">
    <property type="taxonomic scope" value="Bacteria"/>
</dbReference>
<dbReference type="HOGENOM" id="CLU_009422_4_0_5"/>
<dbReference type="OrthoDB" id="9790080at2"/>
<dbReference type="Proteomes" id="UP000008320">
    <property type="component" value="Chromosome"/>
</dbReference>
<dbReference type="GO" id="GO:0005737">
    <property type="term" value="C:cytoplasm"/>
    <property type="evidence" value="ECO:0007669"/>
    <property type="project" value="UniProtKB-SubCell"/>
</dbReference>
<dbReference type="GO" id="GO:0008650">
    <property type="term" value="F:rRNA (uridine-2'-O-)-methyltransferase activity"/>
    <property type="evidence" value="ECO:0007669"/>
    <property type="project" value="UniProtKB-UniRule"/>
</dbReference>
<dbReference type="CDD" id="cd02440">
    <property type="entry name" value="AdoMet_MTases"/>
    <property type="match status" value="1"/>
</dbReference>
<dbReference type="Gene3D" id="3.40.50.150">
    <property type="entry name" value="Vaccinia Virus protein VP39"/>
    <property type="match status" value="1"/>
</dbReference>
<dbReference type="HAMAP" id="MF_01547">
    <property type="entry name" value="RNA_methyltr_E"/>
    <property type="match status" value="1"/>
</dbReference>
<dbReference type="InterPro" id="IPR050082">
    <property type="entry name" value="RNA_methyltr_RlmE"/>
</dbReference>
<dbReference type="InterPro" id="IPR002877">
    <property type="entry name" value="RNA_MeTrfase_FtsJ_dom"/>
</dbReference>
<dbReference type="InterPro" id="IPR015507">
    <property type="entry name" value="rRNA-MeTfrase_E"/>
</dbReference>
<dbReference type="InterPro" id="IPR029063">
    <property type="entry name" value="SAM-dependent_MTases_sf"/>
</dbReference>
<dbReference type="PANTHER" id="PTHR10920">
    <property type="entry name" value="RIBOSOMAL RNA METHYLTRANSFERASE"/>
    <property type="match status" value="1"/>
</dbReference>
<dbReference type="PANTHER" id="PTHR10920:SF18">
    <property type="entry name" value="RRNA METHYLTRANSFERASE 2, MITOCHONDRIAL"/>
    <property type="match status" value="1"/>
</dbReference>
<dbReference type="Pfam" id="PF01728">
    <property type="entry name" value="FtsJ"/>
    <property type="match status" value="1"/>
</dbReference>
<dbReference type="PIRSF" id="PIRSF005461">
    <property type="entry name" value="23S_rRNA_mtase"/>
    <property type="match status" value="1"/>
</dbReference>
<dbReference type="SUPFAM" id="SSF53335">
    <property type="entry name" value="S-adenosyl-L-methionine-dependent methyltransferases"/>
    <property type="match status" value="1"/>
</dbReference>
<name>RLME_EHRCR</name>
<gene>
    <name evidence="1" type="primary">rlmE</name>
    <name evidence="1" type="synonym">ftsJ</name>
    <name evidence="1" type="synonym">rrmJ</name>
    <name type="ordered locus">ECH_0533</name>
</gene>